<organism>
    <name type="scientific">Rhizorhabdus wittichii (strain DSM 6014 / CCUG 31198 / JCM 15750 / NBRC 105917 / EY 4224 / RW1)</name>
    <name type="common">Sphingomonas wittichii</name>
    <dbReference type="NCBI Taxonomy" id="392499"/>
    <lineage>
        <taxon>Bacteria</taxon>
        <taxon>Pseudomonadati</taxon>
        <taxon>Pseudomonadota</taxon>
        <taxon>Alphaproteobacteria</taxon>
        <taxon>Sphingomonadales</taxon>
        <taxon>Sphingomonadaceae</taxon>
        <taxon>Rhizorhabdus</taxon>
    </lineage>
</organism>
<sequence>MSGADRPDRIARRIHVKGKVQGVWFRAWTVEQAAELGLDGWVRNRADGSVEAVAAGPADRVEEMIARCRRGSPASRVDSIDVEDTPGVVAQGFTQKPTV</sequence>
<accession>A5VFP2</accession>
<proteinExistence type="inferred from homology"/>
<gene>
    <name type="primary">acyP</name>
    <name type="ordered locus">Swit_4771</name>
</gene>
<comment type="catalytic activity">
    <reaction>
        <text>an acyl phosphate + H2O = a carboxylate + phosphate + H(+)</text>
        <dbReference type="Rhea" id="RHEA:14965"/>
        <dbReference type="ChEBI" id="CHEBI:15377"/>
        <dbReference type="ChEBI" id="CHEBI:15378"/>
        <dbReference type="ChEBI" id="CHEBI:29067"/>
        <dbReference type="ChEBI" id="CHEBI:43474"/>
        <dbReference type="ChEBI" id="CHEBI:59918"/>
        <dbReference type="EC" id="3.6.1.7"/>
    </reaction>
</comment>
<comment type="similarity">
    <text evidence="2">Belongs to the acylphosphatase family.</text>
</comment>
<dbReference type="EC" id="3.6.1.7"/>
<dbReference type="EMBL" id="CP000699">
    <property type="protein sequence ID" value="ABQ71108.1"/>
    <property type="molecule type" value="Genomic_DNA"/>
</dbReference>
<dbReference type="SMR" id="A5VFP2"/>
<dbReference type="STRING" id="392499.Swit_4771"/>
<dbReference type="PaxDb" id="392499-Swit_4771"/>
<dbReference type="KEGG" id="swi:Swit_4771"/>
<dbReference type="eggNOG" id="COG1254">
    <property type="taxonomic scope" value="Bacteria"/>
</dbReference>
<dbReference type="HOGENOM" id="CLU_141932_3_2_5"/>
<dbReference type="OrthoDB" id="5295388at2"/>
<dbReference type="Proteomes" id="UP000001989">
    <property type="component" value="Chromosome"/>
</dbReference>
<dbReference type="GO" id="GO:0003998">
    <property type="term" value="F:acylphosphatase activity"/>
    <property type="evidence" value="ECO:0007669"/>
    <property type="project" value="UniProtKB-EC"/>
</dbReference>
<dbReference type="Gene3D" id="3.30.70.100">
    <property type="match status" value="1"/>
</dbReference>
<dbReference type="InterPro" id="IPR020456">
    <property type="entry name" value="Acylphosphatase"/>
</dbReference>
<dbReference type="InterPro" id="IPR001792">
    <property type="entry name" value="Acylphosphatase-like_dom"/>
</dbReference>
<dbReference type="InterPro" id="IPR036046">
    <property type="entry name" value="Acylphosphatase-like_dom_sf"/>
</dbReference>
<dbReference type="InterPro" id="IPR017968">
    <property type="entry name" value="Acylphosphatase_CS"/>
</dbReference>
<dbReference type="NCBIfam" id="NF010996">
    <property type="entry name" value="PRK14421.1"/>
    <property type="match status" value="1"/>
</dbReference>
<dbReference type="PANTHER" id="PTHR47268">
    <property type="entry name" value="ACYLPHOSPHATASE"/>
    <property type="match status" value="1"/>
</dbReference>
<dbReference type="PANTHER" id="PTHR47268:SF4">
    <property type="entry name" value="ACYLPHOSPHATASE"/>
    <property type="match status" value="1"/>
</dbReference>
<dbReference type="Pfam" id="PF00708">
    <property type="entry name" value="Acylphosphatase"/>
    <property type="match status" value="1"/>
</dbReference>
<dbReference type="PRINTS" id="PR00112">
    <property type="entry name" value="ACYLPHPHTASE"/>
</dbReference>
<dbReference type="SUPFAM" id="SSF54975">
    <property type="entry name" value="Acylphosphatase/BLUF domain-like"/>
    <property type="match status" value="1"/>
</dbReference>
<dbReference type="PROSITE" id="PS00150">
    <property type="entry name" value="ACYLPHOSPHATASE_1"/>
    <property type="match status" value="1"/>
</dbReference>
<dbReference type="PROSITE" id="PS00151">
    <property type="entry name" value="ACYLPHOSPHATASE_2"/>
    <property type="match status" value="1"/>
</dbReference>
<dbReference type="PROSITE" id="PS51160">
    <property type="entry name" value="ACYLPHOSPHATASE_3"/>
    <property type="match status" value="1"/>
</dbReference>
<protein>
    <recommendedName>
        <fullName>Acylphosphatase</fullName>
        <ecNumber>3.6.1.7</ecNumber>
    </recommendedName>
    <alternativeName>
        <fullName>Acylphosphate phosphohydrolase</fullName>
    </alternativeName>
</protein>
<name>ACYP_RHIWR</name>
<reference key="1">
    <citation type="journal article" date="2010" name="J. Bacteriol.">
        <title>Genome sequence of the dioxin-mineralizing bacterium Sphingomonas wittichii RW1.</title>
        <authorList>
            <person name="Miller T.R."/>
            <person name="Delcher A.L."/>
            <person name="Salzberg S.L."/>
            <person name="Saunders E."/>
            <person name="Detter J.C."/>
            <person name="Halden R.U."/>
        </authorList>
    </citation>
    <scope>NUCLEOTIDE SEQUENCE [LARGE SCALE GENOMIC DNA]</scope>
    <source>
        <strain>DSM 6014 / CCUG 31198 / JCM 15750 / NBRC 105917 / EY 4224 / RW1</strain>
    </source>
</reference>
<feature type="chain" id="PRO_0000326807" description="Acylphosphatase">
    <location>
        <begin position="1"/>
        <end position="99"/>
    </location>
</feature>
<feature type="domain" description="Acylphosphatase-like" evidence="1">
    <location>
        <begin position="11"/>
        <end position="97"/>
    </location>
</feature>
<feature type="active site" evidence="1">
    <location>
        <position position="26"/>
    </location>
</feature>
<feature type="active site" evidence="1">
    <location>
        <position position="44"/>
    </location>
</feature>
<evidence type="ECO:0000255" key="1">
    <source>
        <dbReference type="PROSITE-ProRule" id="PRU00520"/>
    </source>
</evidence>
<evidence type="ECO:0000305" key="2"/>
<keyword id="KW-0378">Hydrolase</keyword>
<keyword id="KW-1185">Reference proteome</keyword>